<sequence length="405" mass="44114">MRAAGILTPGALWAPGPSDTRDERRHDAGRLQPALPGDGRGPLRPGVTRMEGLLHASSVAQQGAGALSGRGERASGSRGTDGGHVGTPGGSDPARGPRFDLRITPGGYLWWYLDALSDDGDHGLTIIAMLGSVFSPYYAWARRRGNPDPLNHCALNVALYGKAGKRWTMTERGRKALRQAPGRLDIGPSHLTWDGTALTIDVNEITAPIPSRVRGRIRVIPAAVNAREFTLDPAERHVWWPIAPISRVEVDLEKPALRWSGHGYLDSNRGEEPLEDAFQCWDWSRANTPSGTTMLYDVTARHGTGASLALRFNASGEVEEFPPPPRVRLPTTGIWRIKRGTQCEAGHQARVVETLEDTPFYARSLVETRLAGETATCVHESLSLDRFASPVVQLMLPFRMPRVGG</sequence>
<reference key="1">
    <citation type="journal article" date="2003" name="Appl. Environ. Microbiol.">
        <title>Genes involved in the biosynthesis of photosynthetic pigments in the purple sulfur photosynthetic bacterium Thiocapsa roseopersicina.</title>
        <authorList>
            <person name="Kovacs A.T."/>
            <person name="Rakhely G."/>
            <person name="Kovacs K.L."/>
        </authorList>
    </citation>
    <scope>NUCLEOTIDE SEQUENCE [GENOMIC DNA]</scope>
    <scope>FUNCTION</scope>
    <scope>INDUCTION</scope>
    <source>
        <strain>BBS</strain>
    </source>
</reference>
<reference key="2">
    <citation type="journal article" date="2011" name="Appl. Microbiol. Biotechnol.">
        <title>Biochemical characterization of the carotenoid 1,2-hydratases (CrtC) from Rubrivivax gelatinosus and Thiocapsa roseopersicina.</title>
        <authorList>
            <person name="Hiseni A."/>
            <person name="Arends I.W."/>
            <person name="Otten L.G."/>
        </authorList>
    </citation>
    <scope>FUNCTION</scope>
    <scope>CATALYTIC ACTIVITY</scope>
    <scope>BIOPHYSICOCHEMICAL PROPERTIES</scope>
    <scope>SUBSTRATE SPECIFICITY</scope>
</reference>
<gene>
    <name type="primary">crtC</name>
</gene>
<proteinExistence type="evidence at protein level"/>
<keyword id="KW-0125">Carotenoid biosynthesis</keyword>
<keyword id="KW-0149">Chlorophyll biosynthesis</keyword>
<keyword id="KW-0456">Lyase</keyword>
<keyword id="KW-0602">Photosynthesis</keyword>
<name>CRTC_THIRO</name>
<comment type="function">
    <text evidence="2 3">Involved in the biosynthesis of carotenoids spirilloxanthin. Catalyzes the hydration of lycopene to the corresponding hydroxylated carotenoids 1-HO-lycopene and 1,1'-(HO)2-lycopene. Can also act on geranylgeraniol.</text>
</comment>
<comment type="catalytic activity">
    <reaction evidence="3">
        <text>rhodopin = all-trans-lycopene + H2O</text>
        <dbReference type="Rhea" id="RHEA:31607"/>
        <dbReference type="ChEBI" id="CHEBI:15377"/>
        <dbReference type="ChEBI" id="CHEBI:15948"/>
        <dbReference type="ChEBI" id="CHEBI:35331"/>
        <dbReference type="EC" id="4.2.1.131"/>
    </reaction>
</comment>
<comment type="catalytic activity">
    <reaction evidence="3">
        <text>1,1'-dihydroxy-1,1',2,2'-tetrahydrolycopene = rhodopin + H2O</text>
        <dbReference type="Rhea" id="RHEA:31611"/>
        <dbReference type="ChEBI" id="CHEBI:15377"/>
        <dbReference type="ChEBI" id="CHEBI:35331"/>
        <dbReference type="ChEBI" id="CHEBI:63065"/>
        <dbReference type="EC" id="4.2.1.131"/>
    </reaction>
</comment>
<comment type="biophysicochemical properties">
    <kinetics>
        <KM evidence="3">9.8 uM for lycopene (at pH 8 and at 28 degrees Celsius)</KM>
        <Vmax evidence="3">0.15 nmol/h/mg enzyme with lycopene (at pH 8 and at 28 degrees Celsius)</Vmax>
    </kinetics>
    <phDependence>
        <text evidence="3">Optimum pH is 8. No activity is detected at pH 4.0-5.0. At higher pH values, it shows rapid decrease in activity, although 50% of the relative activity is still detected at pH 9.0. It retains much residual activity after 30 minutes incubation at pH 4.0-8.0, indicating that CrtC is stable in both slightly alkaline and acid environments.</text>
    </phDependence>
    <temperatureDependence>
        <text evidence="3">Optimum temperature is 30 degrees Celsius. Enzyme activity is significantly lower at 20 degrees Celsius and 40 degrees Celsius.</text>
    </temperatureDependence>
</comment>
<comment type="induction">
    <text evidence="5">Repressed by oxygen.</text>
</comment>
<comment type="similarity">
    <text evidence="4">Belongs to the CrtC hydratase family.</text>
</comment>
<evidence type="ECO:0000256" key="1">
    <source>
        <dbReference type="SAM" id="MobiDB-lite"/>
    </source>
</evidence>
<evidence type="ECO:0000269" key="2">
    <source>
    </source>
</evidence>
<evidence type="ECO:0000269" key="3">
    <source>
    </source>
</evidence>
<evidence type="ECO:0000305" key="4"/>
<evidence type="ECO:0000305" key="5">
    <source>
    </source>
</evidence>
<dbReference type="EC" id="4.2.1.131"/>
<dbReference type="EMBL" id="AF528191">
    <property type="protein sequence ID" value="AAP59035.1"/>
    <property type="molecule type" value="Genomic_DNA"/>
</dbReference>
<dbReference type="STRING" id="1058.SAMN05421783_11330"/>
<dbReference type="KEGG" id="ag:AAP59035"/>
<dbReference type="BRENDA" id="4.2.1.131">
    <property type="organism ID" value="6357"/>
</dbReference>
<dbReference type="GO" id="GO:0016836">
    <property type="term" value="F:hydro-lyase activity"/>
    <property type="evidence" value="ECO:0000314"/>
    <property type="project" value="UniProtKB"/>
</dbReference>
<dbReference type="GO" id="GO:0016116">
    <property type="term" value="P:carotenoid metabolic process"/>
    <property type="evidence" value="ECO:0000314"/>
    <property type="project" value="UniProtKB"/>
</dbReference>
<dbReference type="GO" id="GO:0015995">
    <property type="term" value="P:chlorophyll biosynthetic process"/>
    <property type="evidence" value="ECO:0007669"/>
    <property type="project" value="UniProtKB-KW"/>
</dbReference>
<dbReference type="GO" id="GO:0015979">
    <property type="term" value="P:photosynthesis"/>
    <property type="evidence" value="ECO:0007669"/>
    <property type="project" value="UniProtKB-KW"/>
</dbReference>
<dbReference type="GO" id="GO:1901180">
    <property type="term" value="P:spheroidene biosynthetic process"/>
    <property type="evidence" value="ECO:0000314"/>
    <property type="project" value="UniProtKB"/>
</dbReference>
<dbReference type="CDD" id="cd21471">
    <property type="entry name" value="CrtC-like"/>
    <property type="match status" value="1"/>
</dbReference>
<dbReference type="SUPFAM" id="SSF159245">
    <property type="entry name" value="AttH-like"/>
    <property type="match status" value="1"/>
</dbReference>
<feature type="chain" id="PRO_0000422998" description="Acyclic carotenoid 1,2-hydratase">
    <location>
        <begin position="1"/>
        <end position="405"/>
    </location>
</feature>
<feature type="region of interest" description="Disordered" evidence="1">
    <location>
        <begin position="1"/>
        <end position="47"/>
    </location>
</feature>
<feature type="region of interest" description="Disordered" evidence="1">
    <location>
        <begin position="61"/>
        <end position="98"/>
    </location>
</feature>
<feature type="compositionally biased region" description="Basic and acidic residues" evidence="1">
    <location>
        <begin position="19"/>
        <end position="29"/>
    </location>
</feature>
<feature type="compositionally biased region" description="Low complexity" evidence="1">
    <location>
        <begin position="33"/>
        <end position="46"/>
    </location>
</feature>
<feature type="compositionally biased region" description="Gly residues" evidence="1">
    <location>
        <begin position="79"/>
        <end position="89"/>
    </location>
</feature>
<protein>
    <recommendedName>
        <fullName>Acyclic carotenoid 1,2-hydratase</fullName>
        <ecNumber>4.2.1.131</ecNumber>
    </recommendedName>
    <alternativeName>
        <fullName>Hydroxylycopene hydratase</fullName>
    </alternativeName>
    <alternativeName>
        <fullName>Lycopene hydratase</fullName>
    </alternativeName>
</protein>
<organism>
    <name type="scientific">Thiocapsa roseopersicina</name>
    <dbReference type="NCBI Taxonomy" id="1058"/>
    <lineage>
        <taxon>Bacteria</taxon>
        <taxon>Pseudomonadati</taxon>
        <taxon>Pseudomonadota</taxon>
        <taxon>Gammaproteobacteria</taxon>
        <taxon>Chromatiales</taxon>
        <taxon>Chromatiaceae</taxon>
        <taxon>Thiocapsa</taxon>
    </lineage>
</organism>
<accession>Q7X3G5</accession>